<comment type="function">
    <text evidence="1">Catalyzes the formation of 4-diphosphocytidyl-2-C-methyl-D-erythritol from CTP and 2-C-methyl-D-erythritol 4-phosphate (MEP).</text>
</comment>
<comment type="catalytic activity">
    <reaction evidence="1">
        <text>2-C-methyl-D-erythritol 4-phosphate + CTP + H(+) = 4-CDP-2-C-methyl-D-erythritol + diphosphate</text>
        <dbReference type="Rhea" id="RHEA:13429"/>
        <dbReference type="ChEBI" id="CHEBI:15378"/>
        <dbReference type="ChEBI" id="CHEBI:33019"/>
        <dbReference type="ChEBI" id="CHEBI:37563"/>
        <dbReference type="ChEBI" id="CHEBI:57823"/>
        <dbReference type="ChEBI" id="CHEBI:58262"/>
        <dbReference type="EC" id="2.7.7.60"/>
    </reaction>
</comment>
<comment type="pathway">
    <text evidence="1">Isoprenoid biosynthesis; isopentenyl diphosphate biosynthesis via DXP pathway; isopentenyl diphosphate from 1-deoxy-D-xylulose 5-phosphate: step 2/6.</text>
</comment>
<comment type="similarity">
    <text evidence="1">Belongs to the IspD/TarI cytidylyltransferase family. IspD subfamily.</text>
</comment>
<protein>
    <recommendedName>
        <fullName evidence="1">2-C-methyl-D-erythritol 4-phosphate cytidylyltransferase</fullName>
        <ecNumber evidence="1">2.7.7.60</ecNumber>
    </recommendedName>
    <alternativeName>
        <fullName evidence="1">4-diphosphocytidyl-2C-methyl-D-erythritol synthase</fullName>
    </alternativeName>
    <alternativeName>
        <fullName evidence="1">MEP cytidylyltransferase</fullName>
        <shortName evidence="1">MCT</shortName>
    </alternativeName>
</protein>
<keyword id="KW-0414">Isoprene biosynthesis</keyword>
<keyword id="KW-0548">Nucleotidyltransferase</keyword>
<keyword id="KW-0808">Transferase</keyword>
<sequence length="291" mass="31334">MTERDFDTPVETPTVQPAPAQGAKPAQTVPVVAVVLAAGFGTRFDPDNPKQLVSVGGKPIVCWSIDAFEHCDRVSDIVVVVNPKVRGEVETLVGEMGYTKVRVIIDGGDERVDSTAAALDMLATAGIPDDAKILIHDAVRPFVEQSAIDGSIDALDQFTAATVAYASTDTVLLTEDLGDLKVVKSVPDRPNTFRAQTPQSFRFATIRHAYDLAAADPDFHPTDDTRVVVDYLPDEPVAIVSGAETNLKITTLEDIPTAERIAEEILGRDPKEEARARMHALLAQAAGQMHR</sequence>
<dbReference type="EC" id="2.7.7.60" evidence="1"/>
<dbReference type="EMBL" id="CP000605">
    <property type="protein sequence ID" value="ACD98528.1"/>
    <property type="molecule type" value="Genomic_DNA"/>
</dbReference>
<dbReference type="RefSeq" id="WP_007054792.1">
    <property type="nucleotide sequence ID" value="NZ_AABM02000007.1"/>
</dbReference>
<dbReference type="SMR" id="B3DTQ9"/>
<dbReference type="KEGG" id="blj:BLD_1082"/>
<dbReference type="HOGENOM" id="CLU_061281_2_1_11"/>
<dbReference type="UniPathway" id="UPA00056">
    <property type="reaction ID" value="UER00093"/>
</dbReference>
<dbReference type="Proteomes" id="UP000002419">
    <property type="component" value="Chromosome"/>
</dbReference>
<dbReference type="GO" id="GO:0050518">
    <property type="term" value="F:2-C-methyl-D-erythritol 4-phosphate cytidylyltransferase activity"/>
    <property type="evidence" value="ECO:0007669"/>
    <property type="project" value="UniProtKB-UniRule"/>
</dbReference>
<dbReference type="GO" id="GO:0019288">
    <property type="term" value="P:isopentenyl diphosphate biosynthetic process, methylerythritol 4-phosphate pathway"/>
    <property type="evidence" value="ECO:0007669"/>
    <property type="project" value="UniProtKB-UniRule"/>
</dbReference>
<dbReference type="CDD" id="cd02516">
    <property type="entry name" value="CDP-ME_synthetase"/>
    <property type="match status" value="1"/>
</dbReference>
<dbReference type="Gene3D" id="3.90.550.10">
    <property type="entry name" value="Spore Coat Polysaccharide Biosynthesis Protein SpsA, Chain A"/>
    <property type="match status" value="1"/>
</dbReference>
<dbReference type="HAMAP" id="MF_00108">
    <property type="entry name" value="IspD"/>
    <property type="match status" value="1"/>
</dbReference>
<dbReference type="InterPro" id="IPR001228">
    <property type="entry name" value="IspD"/>
</dbReference>
<dbReference type="InterPro" id="IPR034683">
    <property type="entry name" value="IspD/TarI"/>
</dbReference>
<dbReference type="InterPro" id="IPR050088">
    <property type="entry name" value="IspD/TarI_cytidylyltransf_bact"/>
</dbReference>
<dbReference type="InterPro" id="IPR018294">
    <property type="entry name" value="ISPD_synthase_CS"/>
</dbReference>
<dbReference type="InterPro" id="IPR029044">
    <property type="entry name" value="Nucleotide-diphossugar_trans"/>
</dbReference>
<dbReference type="PANTHER" id="PTHR32125">
    <property type="entry name" value="2-C-METHYL-D-ERYTHRITOL 4-PHOSPHATE CYTIDYLYLTRANSFERASE, CHLOROPLASTIC"/>
    <property type="match status" value="1"/>
</dbReference>
<dbReference type="PANTHER" id="PTHR32125:SF4">
    <property type="entry name" value="2-C-METHYL-D-ERYTHRITOL 4-PHOSPHATE CYTIDYLYLTRANSFERASE, CHLOROPLASTIC"/>
    <property type="match status" value="1"/>
</dbReference>
<dbReference type="Pfam" id="PF01128">
    <property type="entry name" value="IspD"/>
    <property type="match status" value="1"/>
</dbReference>
<dbReference type="SUPFAM" id="SSF53448">
    <property type="entry name" value="Nucleotide-diphospho-sugar transferases"/>
    <property type="match status" value="1"/>
</dbReference>
<dbReference type="PROSITE" id="PS01295">
    <property type="entry name" value="ISPD"/>
    <property type="match status" value="1"/>
</dbReference>
<proteinExistence type="inferred from homology"/>
<reference key="1">
    <citation type="journal article" date="2008" name="BMC Genomics">
        <title>Comparative genomic analysis of the gut bacterium Bifidobacterium longum reveals loci susceptible to deletion during pure culture growth.</title>
        <authorList>
            <person name="Lee J.H."/>
            <person name="Karamychev V.N."/>
            <person name="Kozyavkin S.A."/>
            <person name="Mills D."/>
            <person name="Pavlov A.R."/>
            <person name="Pavlova N.V."/>
            <person name="Polouchine N.N."/>
            <person name="Richardson P.M."/>
            <person name="Shakhova V.V."/>
            <person name="Slesarev A.I."/>
            <person name="Weimer B."/>
            <person name="O'Sullivan D.J."/>
        </authorList>
    </citation>
    <scope>NUCLEOTIDE SEQUENCE [LARGE SCALE GENOMIC DNA]</scope>
    <source>
        <strain>DJO10A</strain>
    </source>
</reference>
<name>ISPD_BIFLD</name>
<accession>B3DTQ9</accession>
<feature type="chain" id="PRO_1000094310" description="2-C-methyl-D-erythritol 4-phosphate cytidylyltransferase">
    <location>
        <begin position="1"/>
        <end position="291"/>
    </location>
</feature>
<feature type="region of interest" description="Disordered" evidence="2">
    <location>
        <begin position="1"/>
        <end position="23"/>
    </location>
</feature>
<feature type="site" description="Transition state stabilizer" evidence="1">
    <location>
        <position position="43"/>
    </location>
</feature>
<feature type="site" description="Transition state stabilizer" evidence="1">
    <location>
        <position position="50"/>
    </location>
</feature>
<feature type="site" description="Positions MEP for the nucleophilic attack" evidence="1">
    <location>
        <position position="189"/>
    </location>
</feature>
<feature type="site" description="Positions MEP for the nucleophilic attack" evidence="1">
    <location>
        <position position="248"/>
    </location>
</feature>
<evidence type="ECO:0000255" key="1">
    <source>
        <dbReference type="HAMAP-Rule" id="MF_00108"/>
    </source>
</evidence>
<evidence type="ECO:0000256" key="2">
    <source>
        <dbReference type="SAM" id="MobiDB-lite"/>
    </source>
</evidence>
<organism>
    <name type="scientific">Bifidobacterium longum (strain DJO10A)</name>
    <dbReference type="NCBI Taxonomy" id="205913"/>
    <lineage>
        <taxon>Bacteria</taxon>
        <taxon>Bacillati</taxon>
        <taxon>Actinomycetota</taxon>
        <taxon>Actinomycetes</taxon>
        <taxon>Bifidobacteriales</taxon>
        <taxon>Bifidobacteriaceae</taxon>
        <taxon>Bifidobacterium</taxon>
    </lineage>
</organism>
<gene>
    <name evidence="1" type="primary">ispD</name>
    <name type="ordered locus">BLD_1082</name>
</gene>